<protein>
    <recommendedName>
        <fullName evidence="1">Phospho-N-acetylmuramoyl-pentapeptide-transferase</fullName>
        <ecNumber evidence="1">2.7.8.13</ecNumber>
    </recommendedName>
    <alternativeName>
        <fullName evidence="1">UDP-MurNAc-pentapeptide phosphotransferase</fullName>
    </alternativeName>
</protein>
<dbReference type="EC" id="2.7.8.13" evidence="1"/>
<dbReference type="EMBL" id="AE016828">
    <property type="protein sequence ID" value="AAO89689.1"/>
    <property type="molecule type" value="Genomic_DNA"/>
</dbReference>
<dbReference type="RefSeq" id="NP_819175.1">
    <property type="nucleotide sequence ID" value="NC_002971.4"/>
</dbReference>
<dbReference type="RefSeq" id="WP_005769458.1">
    <property type="nucleotide sequence ID" value="NZ_CDBG01000001.1"/>
</dbReference>
<dbReference type="SMR" id="Q83F26"/>
<dbReference type="STRING" id="227377.CBU_0125"/>
<dbReference type="EnsemblBacteria" id="AAO89689">
    <property type="protein sequence ID" value="AAO89689"/>
    <property type="gene ID" value="CBU_0125"/>
</dbReference>
<dbReference type="GeneID" id="1207996"/>
<dbReference type="KEGG" id="cbu:CBU_0125"/>
<dbReference type="PATRIC" id="fig|227377.7.peg.128"/>
<dbReference type="eggNOG" id="COG0472">
    <property type="taxonomic scope" value="Bacteria"/>
</dbReference>
<dbReference type="HOGENOM" id="CLU_023982_0_0_6"/>
<dbReference type="OrthoDB" id="9805475at2"/>
<dbReference type="UniPathway" id="UPA00219"/>
<dbReference type="Proteomes" id="UP000002671">
    <property type="component" value="Chromosome"/>
</dbReference>
<dbReference type="GO" id="GO:0005886">
    <property type="term" value="C:plasma membrane"/>
    <property type="evidence" value="ECO:0000318"/>
    <property type="project" value="GO_Central"/>
</dbReference>
<dbReference type="GO" id="GO:0046872">
    <property type="term" value="F:metal ion binding"/>
    <property type="evidence" value="ECO:0007669"/>
    <property type="project" value="UniProtKB-KW"/>
</dbReference>
<dbReference type="GO" id="GO:0008963">
    <property type="term" value="F:phospho-N-acetylmuramoyl-pentapeptide-transferase activity"/>
    <property type="evidence" value="ECO:0000318"/>
    <property type="project" value="GO_Central"/>
</dbReference>
<dbReference type="GO" id="GO:0051992">
    <property type="term" value="F:UDP-N-acetylmuramoyl-L-alanyl-D-glutamyl-meso-2,6-diaminopimelyl-D-alanyl-D-alanine:undecaprenyl-phosphate transferase activity"/>
    <property type="evidence" value="ECO:0007669"/>
    <property type="project" value="RHEA"/>
</dbReference>
<dbReference type="GO" id="GO:0051301">
    <property type="term" value="P:cell division"/>
    <property type="evidence" value="ECO:0007669"/>
    <property type="project" value="UniProtKB-KW"/>
</dbReference>
<dbReference type="GO" id="GO:0044038">
    <property type="term" value="P:cell wall macromolecule biosynthetic process"/>
    <property type="evidence" value="ECO:0000318"/>
    <property type="project" value="GO_Central"/>
</dbReference>
<dbReference type="GO" id="GO:0071555">
    <property type="term" value="P:cell wall organization"/>
    <property type="evidence" value="ECO:0000318"/>
    <property type="project" value="GO_Central"/>
</dbReference>
<dbReference type="GO" id="GO:0009252">
    <property type="term" value="P:peptidoglycan biosynthetic process"/>
    <property type="evidence" value="ECO:0007669"/>
    <property type="project" value="UniProtKB-UniRule"/>
</dbReference>
<dbReference type="GO" id="GO:0008360">
    <property type="term" value="P:regulation of cell shape"/>
    <property type="evidence" value="ECO:0007669"/>
    <property type="project" value="UniProtKB-KW"/>
</dbReference>
<dbReference type="CDD" id="cd06852">
    <property type="entry name" value="GT_MraY"/>
    <property type="match status" value="1"/>
</dbReference>
<dbReference type="HAMAP" id="MF_00038">
    <property type="entry name" value="MraY"/>
    <property type="match status" value="1"/>
</dbReference>
<dbReference type="InterPro" id="IPR000715">
    <property type="entry name" value="Glycosyl_transferase_4"/>
</dbReference>
<dbReference type="InterPro" id="IPR003524">
    <property type="entry name" value="PNAcMuramoyl-5peptid_Trfase"/>
</dbReference>
<dbReference type="InterPro" id="IPR018480">
    <property type="entry name" value="PNAcMuramoyl-5peptid_Trfase_CS"/>
</dbReference>
<dbReference type="NCBIfam" id="TIGR00445">
    <property type="entry name" value="mraY"/>
    <property type="match status" value="1"/>
</dbReference>
<dbReference type="PANTHER" id="PTHR22926">
    <property type="entry name" value="PHOSPHO-N-ACETYLMURAMOYL-PENTAPEPTIDE-TRANSFERASE"/>
    <property type="match status" value="1"/>
</dbReference>
<dbReference type="PANTHER" id="PTHR22926:SF5">
    <property type="entry name" value="PHOSPHO-N-ACETYLMURAMOYL-PENTAPEPTIDE-TRANSFERASE HOMOLOG"/>
    <property type="match status" value="1"/>
</dbReference>
<dbReference type="Pfam" id="PF00953">
    <property type="entry name" value="Glycos_transf_4"/>
    <property type="match status" value="1"/>
</dbReference>
<dbReference type="Pfam" id="PF10555">
    <property type="entry name" value="MraY_sig1"/>
    <property type="match status" value="1"/>
</dbReference>
<dbReference type="PROSITE" id="PS01347">
    <property type="entry name" value="MRAY_1"/>
    <property type="match status" value="1"/>
</dbReference>
<dbReference type="PROSITE" id="PS01348">
    <property type="entry name" value="MRAY_2"/>
    <property type="match status" value="1"/>
</dbReference>
<feature type="chain" id="PRO_0000108816" description="Phospho-N-acetylmuramoyl-pentapeptide-transferase">
    <location>
        <begin position="1"/>
        <end position="361"/>
    </location>
</feature>
<feature type="transmembrane region" description="Helical" evidence="1">
    <location>
        <begin position="18"/>
        <end position="38"/>
    </location>
</feature>
<feature type="transmembrane region" description="Helical" evidence="1">
    <location>
        <begin position="73"/>
        <end position="93"/>
    </location>
</feature>
<feature type="transmembrane region" description="Helical" evidence="1">
    <location>
        <begin position="97"/>
        <end position="117"/>
    </location>
</feature>
<feature type="transmembrane region" description="Helical" evidence="1">
    <location>
        <begin position="135"/>
        <end position="155"/>
    </location>
</feature>
<feature type="transmembrane region" description="Helical" evidence="1">
    <location>
        <begin position="168"/>
        <end position="188"/>
    </location>
</feature>
<feature type="transmembrane region" description="Helical" evidence="1">
    <location>
        <begin position="196"/>
        <end position="216"/>
    </location>
</feature>
<feature type="transmembrane region" description="Helical" evidence="1">
    <location>
        <begin position="235"/>
        <end position="255"/>
    </location>
</feature>
<feature type="transmembrane region" description="Helical" evidence="1">
    <location>
        <begin position="263"/>
        <end position="283"/>
    </location>
</feature>
<feature type="transmembrane region" description="Helical" evidence="1">
    <location>
        <begin position="288"/>
        <end position="308"/>
    </location>
</feature>
<feature type="transmembrane region" description="Helical" evidence="1">
    <location>
        <begin position="338"/>
        <end position="358"/>
    </location>
</feature>
<organism>
    <name type="scientific">Coxiella burnetii (strain RSA 493 / Nine Mile phase I)</name>
    <dbReference type="NCBI Taxonomy" id="227377"/>
    <lineage>
        <taxon>Bacteria</taxon>
        <taxon>Pseudomonadati</taxon>
        <taxon>Pseudomonadota</taxon>
        <taxon>Gammaproteobacteria</taxon>
        <taxon>Legionellales</taxon>
        <taxon>Coxiellaceae</taxon>
        <taxon>Coxiella</taxon>
    </lineage>
</organism>
<reference key="1">
    <citation type="journal article" date="2003" name="Proc. Natl. Acad. Sci. U.S.A.">
        <title>Complete genome sequence of the Q-fever pathogen, Coxiella burnetii.</title>
        <authorList>
            <person name="Seshadri R."/>
            <person name="Paulsen I.T."/>
            <person name="Eisen J.A."/>
            <person name="Read T.D."/>
            <person name="Nelson K.E."/>
            <person name="Nelson W.C."/>
            <person name="Ward N.L."/>
            <person name="Tettelin H."/>
            <person name="Davidsen T.M."/>
            <person name="Beanan M.J."/>
            <person name="DeBoy R.T."/>
            <person name="Daugherty S.C."/>
            <person name="Brinkac L.M."/>
            <person name="Madupu R."/>
            <person name="Dodson R.J."/>
            <person name="Khouri H.M."/>
            <person name="Lee K.H."/>
            <person name="Carty H.A."/>
            <person name="Scanlan D."/>
            <person name="Heinzen R.A."/>
            <person name="Thompson H.A."/>
            <person name="Samuel J.E."/>
            <person name="Fraser C.M."/>
            <person name="Heidelberg J.F."/>
        </authorList>
    </citation>
    <scope>NUCLEOTIDE SEQUENCE [LARGE SCALE GENOMIC DNA]</scope>
    <source>
        <strain>RSA 493 / Nine Mile phase I</strain>
    </source>
</reference>
<name>MRAY_COXBU</name>
<sequence>MLLWLTNFLSQHFHAFRVFNYLTFRSIVSALTALILVLSLSPRLIKYLVSLQVGQMVRNDGPQTHLKKSGTPTMGGVLIIVAIVISVLLWGDLSNRFIWVILLVTVAFSAIGWMDDYRKIIRKNSKGLSARSKYLLQSIIGALAAVYLYFSATTGAETALVIPFLKNVLPNLGLFYIVLAYFVIVGSSNAVNLTDGLDGLALMPTVMIGAALGVFAYTTGNHFFAQYLAIPYIPGAGEVVVFCSALVGAGLGFLWYNTYPAQVFMGDVGSLGLGAALGVTAVVVRQELVYFLMGGIFVAETLSVILQVGYFKLSGGKRIFRMAPLHHHFELKGWPEPKVIVRFWIITFILVLCGLATLKLR</sequence>
<gene>
    <name evidence="1" type="primary">mraY</name>
    <name type="ordered locus">CBU_0125</name>
</gene>
<accession>Q83F26</accession>
<comment type="function">
    <text evidence="1">Catalyzes the initial step of the lipid cycle reactions in the biosynthesis of the cell wall peptidoglycan: transfers peptidoglycan precursor phospho-MurNAc-pentapeptide from UDP-MurNAc-pentapeptide onto the lipid carrier undecaprenyl phosphate, yielding undecaprenyl-pyrophosphoryl-MurNAc-pentapeptide, known as lipid I.</text>
</comment>
<comment type="catalytic activity">
    <reaction evidence="1">
        <text>UDP-N-acetyl-alpha-D-muramoyl-L-alanyl-gamma-D-glutamyl-meso-2,6-diaminopimeloyl-D-alanyl-D-alanine + di-trans,octa-cis-undecaprenyl phosphate = di-trans,octa-cis-undecaprenyl diphospho-N-acetyl-alpha-D-muramoyl-L-alanyl-D-glutamyl-meso-2,6-diaminopimeloyl-D-alanyl-D-alanine + UMP</text>
        <dbReference type="Rhea" id="RHEA:28386"/>
        <dbReference type="ChEBI" id="CHEBI:57865"/>
        <dbReference type="ChEBI" id="CHEBI:60392"/>
        <dbReference type="ChEBI" id="CHEBI:61386"/>
        <dbReference type="ChEBI" id="CHEBI:61387"/>
        <dbReference type="EC" id="2.7.8.13"/>
    </reaction>
</comment>
<comment type="cofactor">
    <cofactor evidence="1">
        <name>Mg(2+)</name>
        <dbReference type="ChEBI" id="CHEBI:18420"/>
    </cofactor>
</comment>
<comment type="pathway">
    <text evidence="1">Cell wall biogenesis; peptidoglycan biosynthesis.</text>
</comment>
<comment type="subcellular location">
    <subcellularLocation>
        <location evidence="1">Cell inner membrane</location>
        <topology evidence="1">Multi-pass membrane protein</topology>
    </subcellularLocation>
</comment>
<comment type="similarity">
    <text evidence="1">Belongs to the glycosyltransferase 4 family. MraY subfamily.</text>
</comment>
<evidence type="ECO:0000255" key="1">
    <source>
        <dbReference type="HAMAP-Rule" id="MF_00038"/>
    </source>
</evidence>
<proteinExistence type="inferred from homology"/>
<keyword id="KW-0131">Cell cycle</keyword>
<keyword id="KW-0132">Cell division</keyword>
<keyword id="KW-0997">Cell inner membrane</keyword>
<keyword id="KW-1003">Cell membrane</keyword>
<keyword id="KW-0133">Cell shape</keyword>
<keyword id="KW-0961">Cell wall biogenesis/degradation</keyword>
<keyword id="KW-0460">Magnesium</keyword>
<keyword id="KW-0472">Membrane</keyword>
<keyword id="KW-0479">Metal-binding</keyword>
<keyword id="KW-0573">Peptidoglycan synthesis</keyword>
<keyword id="KW-1185">Reference proteome</keyword>
<keyword id="KW-0808">Transferase</keyword>
<keyword id="KW-0812">Transmembrane</keyword>
<keyword id="KW-1133">Transmembrane helix</keyword>